<sequence>MKAPSGAFLLGVYSMDTHILR</sequence>
<feature type="chain" id="PRO_0000445177" description="Protein YnfR">
    <location>
        <begin position="1"/>
        <end position="21"/>
    </location>
</feature>
<keyword id="KW-1185">Reference proteome</keyword>
<evidence type="ECO:0000269" key="1">
    <source>
    </source>
</evidence>
<evidence type="ECO:0000303" key="2">
    <source>
    </source>
</evidence>
<proteinExistence type="evidence at protein level"/>
<organism>
    <name type="scientific">Escherichia coli (strain K12)</name>
    <dbReference type="NCBI Taxonomy" id="83333"/>
    <lineage>
        <taxon>Bacteria</taxon>
        <taxon>Pseudomonadati</taxon>
        <taxon>Pseudomonadota</taxon>
        <taxon>Gammaproteobacteria</taxon>
        <taxon>Enterobacterales</taxon>
        <taxon>Enterobacteriaceae</taxon>
        <taxon>Escherichia</taxon>
    </lineage>
</organism>
<dbReference type="EMBL" id="U00096">
    <property type="protein sequence ID" value="AYC08217.1"/>
    <property type="molecule type" value="Genomic_DNA"/>
</dbReference>
<dbReference type="EnsemblBacteria" id="AYC08217">
    <property type="protein sequence ID" value="AYC08217"/>
    <property type="gene ID" value="b4749"/>
</dbReference>
<dbReference type="InParanoid" id="P0DPO9"/>
<dbReference type="BioCyc" id="EcoCyc:MONOMER0-4426"/>
<dbReference type="PRO" id="PR:P0DPO9"/>
<dbReference type="Proteomes" id="UP000000625">
    <property type="component" value="Chromosome"/>
</dbReference>
<protein>
    <recommendedName>
        <fullName evidence="2">Protein YnfR</fullName>
    </recommendedName>
</protein>
<gene>
    <name evidence="2" type="primary">ynfR</name>
    <name type="ordered locus">b4749</name>
</gene>
<accession>P0DPO9</accession>
<accession>A0A385XJU6</accession>
<name>YNFR_ECOLI</name>
<comment type="induction">
    <text evidence="1">By cold shock (at protein level).</text>
</comment>
<reference key="1">
    <citation type="journal article" date="1997" name="Science">
        <title>The complete genome sequence of Escherichia coli K-12.</title>
        <authorList>
            <person name="Blattner F.R."/>
            <person name="Plunkett G. III"/>
            <person name="Bloch C.A."/>
            <person name="Perna N.T."/>
            <person name="Burland V."/>
            <person name="Riley M."/>
            <person name="Collado-Vides J."/>
            <person name="Glasner J.D."/>
            <person name="Rode C.K."/>
            <person name="Mayhew G.F."/>
            <person name="Gregor J."/>
            <person name="Davis N.W."/>
            <person name="Kirkpatrick H.A."/>
            <person name="Goeden M.A."/>
            <person name="Rose D.J."/>
            <person name="Mau B."/>
            <person name="Shao Y."/>
        </authorList>
    </citation>
    <scope>NUCLEOTIDE SEQUENCE [LARGE SCALE GENOMIC DNA]</scope>
    <source>
        <strain>K12 / MG1655 / ATCC 47076</strain>
    </source>
</reference>
<reference key="2">
    <citation type="journal article" date="2018" name="Proteomics">
        <title>Identifying new small proteins in Escherichia coli.</title>
        <authorList>
            <person name="VanOrsdel C.E."/>
            <person name="Kelly J.P."/>
            <person name="Burke B.N."/>
            <person name="Lein C.D."/>
            <person name="Oufiero C.E."/>
            <person name="Sanchez J.F."/>
            <person name="Wimmers L.E."/>
            <person name="Hearn D.J."/>
            <person name="Abuikhdair F.J."/>
            <person name="Barnhart K.R."/>
            <person name="Duley M.L."/>
            <person name="Ernst S.E.G."/>
            <person name="Kenerson B.A."/>
            <person name="Serafin A.J."/>
            <person name="Hemm M.R."/>
        </authorList>
    </citation>
    <scope>IDENTIFICATION</scope>
    <scope>INDUCTION</scope>
</reference>